<reference key="1">
    <citation type="journal article" date="1998" name="J. Biol. Chem.">
        <title>A novel, secreted form of human ADAM 12 (meltrin alpha) provokes myogenesis in vivo.</title>
        <authorList>
            <person name="Gilpin B.J."/>
            <person name="Loechel F."/>
            <person name="Mattei M.-G."/>
            <person name="Engvall E."/>
            <person name="Albrechtsen R."/>
            <person name="Wewer U.M."/>
        </authorList>
    </citation>
    <scope>NUCLEOTIDE SEQUENCE [MRNA] (ISOFORMS 1 AND 2)</scope>
    <scope>VARIANT ARG-48</scope>
    <source>
        <tissue>Placenta</tissue>
    </source>
</reference>
<reference key="2">
    <citation type="submission" date="2001-02" db="EMBL/GenBank/DDBJ databases">
        <authorList>
            <person name="Gilpin B.J."/>
            <person name="Loechel F."/>
            <person name="Mattei M.-G."/>
            <person name="Engvall E."/>
            <person name="Albrechtsen R."/>
            <person name="Wewer U.M."/>
        </authorList>
    </citation>
    <scope>SEQUENCE REVISION TO 36</scope>
</reference>
<reference key="3">
    <citation type="journal article" date="2003" name="Genome Res.">
        <title>The secreted protein discovery initiative (SPDI), a large-scale effort to identify novel human secreted and transmembrane proteins: a bioinformatics assessment.</title>
        <authorList>
            <person name="Clark H.F."/>
            <person name="Gurney A.L."/>
            <person name="Abaya E."/>
            <person name="Baker K."/>
            <person name="Baldwin D.T."/>
            <person name="Brush J."/>
            <person name="Chen J."/>
            <person name="Chow B."/>
            <person name="Chui C."/>
            <person name="Crowley C."/>
            <person name="Currell B."/>
            <person name="Deuel B."/>
            <person name="Dowd P."/>
            <person name="Eaton D."/>
            <person name="Foster J.S."/>
            <person name="Grimaldi C."/>
            <person name="Gu Q."/>
            <person name="Hass P.E."/>
            <person name="Heldens S."/>
            <person name="Huang A."/>
            <person name="Kim H.S."/>
            <person name="Klimowski L."/>
            <person name="Jin Y."/>
            <person name="Johnson S."/>
            <person name="Lee J."/>
            <person name="Lewis L."/>
            <person name="Liao D."/>
            <person name="Mark M.R."/>
            <person name="Robbie E."/>
            <person name="Sanchez C."/>
            <person name="Schoenfeld J."/>
            <person name="Seshagiri S."/>
            <person name="Simmons L."/>
            <person name="Singh J."/>
            <person name="Smith V."/>
            <person name="Stinson J."/>
            <person name="Vagts A."/>
            <person name="Vandlen R.L."/>
            <person name="Watanabe C."/>
            <person name="Wieand D."/>
            <person name="Woods K."/>
            <person name="Xie M.-H."/>
            <person name="Yansura D.G."/>
            <person name="Yi S."/>
            <person name="Yu G."/>
            <person name="Yuan J."/>
            <person name="Zhang M."/>
            <person name="Zhang Z."/>
            <person name="Goddard A.D."/>
            <person name="Wood W.I."/>
            <person name="Godowski P.J."/>
            <person name="Gray A.M."/>
        </authorList>
    </citation>
    <scope>NUCLEOTIDE SEQUENCE [LARGE SCALE MRNA] (ISOFORM 3)</scope>
    <scope>VARIANT ARG-48</scope>
</reference>
<reference key="4">
    <citation type="journal article" date="2004" name="Nature">
        <title>The DNA sequence and comparative analysis of human chromosome 10.</title>
        <authorList>
            <person name="Deloukas P."/>
            <person name="Earthrowl M.E."/>
            <person name="Grafham D.V."/>
            <person name="Rubenfield M."/>
            <person name="French L."/>
            <person name="Steward C.A."/>
            <person name="Sims S.K."/>
            <person name="Jones M.C."/>
            <person name="Searle S."/>
            <person name="Scott C."/>
            <person name="Howe K."/>
            <person name="Hunt S.E."/>
            <person name="Andrews T.D."/>
            <person name="Gilbert J.G.R."/>
            <person name="Swarbreck D."/>
            <person name="Ashurst J.L."/>
            <person name="Taylor A."/>
            <person name="Battles J."/>
            <person name="Bird C.P."/>
            <person name="Ainscough R."/>
            <person name="Almeida J.P."/>
            <person name="Ashwell R.I.S."/>
            <person name="Ambrose K.D."/>
            <person name="Babbage A.K."/>
            <person name="Bagguley C.L."/>
            <person name="Bailey J."/>
            <person name="Banerjee R."/>
            <person name="Bates K."/>
            <person name="Beasley H."/>
            <person name="Bray-Allen S."/>
            <person name="Brown A.J."/>
            <person name="Brown J.Y."/>
            <person name="Burford D.C."/>
            <person name="Burrill W."/>
            <person name="Burton J."/>
            <person name="Cahill P."/>
            <person name="Camire D."/>
            <person name="Carter N.P."/>
            <person name="Chapman J.C."/>
            <person name="Clark S.Y."/>
            <person name="Clarke G."/>
            <person name="Clee C.M."/>
            <person name="Clegg S."/>
            <person name="Corby N."/>
            <person name="Coulson A."/>
            <person name="Dhami P."/>
            <person name="Dutta I."/>
            <person name="Dunn M."/>
            <person name="Faulkner L."/>
            <person name="Frankish A."/>
            <person name="Frankland J.A."/>
            <person name="Garner P."/>
            <person name="Garnett J."/>
            <person name="Gribble S."/>
            <person name="Griffiths C."/>
            <person name="Grocock R."/>
            <person name="Gustafson E."/>
            <person name="Hammond S."/>
            <person name="Harley J.L."/>
            <person name="Hart E."/>
            <person name="Heath P.D."/>
            <person name="Ho T.P."/>
            <person name="Hopkins B."/>
            <person name="Horne J."/>
            <person name="Howden P.J."/>
            <person name="Huckle E."/>
            <person name="Hynds C."/>
            <person name="Johnson C."/>
            <person name="Johnson D."/>
            <person name="Kana A."/>
            <person name="Kay M."/>
            <person name="Kimberley A.M."/>
            <person name="Kershaw J.K."/>
            <person name="Kokkinaki M."/>
            <person name="Laird G.K."/>
            <person name="Lawlor S."/>
            <person name="Lee H.M."/>
            <person name="Leongamornlert D.A."/>
            <person name="Laird G."/>
            <person name="Lloyd C."/>
            <person name="Lloyd D.M."/>
            <person name="Loveland J."/>
            <person name="Lovell J."/>
            <person name="McLaren S."/>
            <person name="McLay K.E."/>
            <person name="McMurray A."/>
            <person name="Mashreghi-Mohammadi M."/>
            <person name="Matthews L."/>
            <person name="Milne S."/>
            <person name="Nickerson T."/>
            <person name="Nguyen M."/>
            <person name="Overton-Larty E."/>
            <person name="Palmer S.A."/>
            <person name="Pearce A.V."/>
            <person name="Peck A.I."/>
            <person name="Pelan S."/>
            <person name="Phillimore B."/>
            <person name="Porter K."/>
            <person name="Rice C.M."/>
            <person name="Rogosin A."/>
            <person name="Ross M.T."/>
            <person name="Sarafidou T."/>
            <person name="Sehra H.K."/>
            <person name="Shownkeen R."/>
            <person name="Skuce C.D."/>
            <person name="Smith M."/>
            <person name="Standring L."/>
            <person name="Sycamore N."/>
            <person name="Tester J."/>
            <person name="Thorpe A."/>
            <person name="Torcasso W."/>
            <person name="Tracey A."/>
            <person name="Tromans A."/>
            <person name="Tsolas J."/>
            <person name="Wall M."/>
            <person name="Walsh J."/>
            <person name="Wang H."/>
            <person name="Weinstock K."/>
            <person name="West A.P."/>
            <person name="Willey D.L."/>
            <person name="Whitehead S.L."/>
            <person name="Wilming L."/>
            <person name="Wray P.W."/>
            <person name="Young L."/>
            <person name="Chen Y."/>
            <person name="Lovering R.C."/>
            <person name="Moschonas N.K."/>
            <person name="Siebert R."/>
            <person name="Fechtel K."/>
            <person name="Bentley D."/>
            <person name="Durbin R.M."/>
            <person name="Hubbard T."/>
            <person name="Doucette-Stamm L."/>
            <person name="Beck S."/>
            <person name="Smith D.R."/>
            <person name="Rogers J."/>
        </authorList>
    </citation>
    <scope>NUCLEOTIDE SEQUENCE [LARGE SCALE GENOMIC DNA]</scope>
</reference>
<reference key="5">
    <citation type="submission" date="2005-09" db="EMBL/GenBank/DDBJ databases">
        <authorList>
            <person name="Mural R.J."/>
            <person name="Istrail S."/>
            <person name="Sutton G.G."/>
            <person name="Florea L."/>
            <person name="Halpern A.L."/>
            <person name="Mobarry C.M."/>
            <person name="Lippert R."/>
            <person name="Walenz B."/>
            <person name="Shatkay H."/>
            <person name="Dew I."/>
            <person name="Miller J.R."/>
            <person name="Flanigan M.J."/>
            <person name="Edwards N.J."/>
            <person name="Bolanos R."/>
            <person name="Fasulo D."/>
            <person name="Halldorsson B.V."/>
            <person name="Hannenhalli S."/>
            <person name="Turner R."/>
            <person name="Yooseph S."/>
            <person name="Lu F."/>
            <person name="Nusskern D.R."/>
            <person name="Shue B.C."/>
            <person name="Zheng X.H."/>
            <person name="Zhong F."/>
            <person name="Delcher A.L."/>
            <person name="Huson D.H."/>
            <person name="Kravitz S.A."/>
            <person name="Mouchard L."/>
            <person name="Reinert K."/>
            <person name="Remington K.A."/>
            <person name="Clark A.G."/>
            <person name="Waterman M.S."/>
            <person name="Eichler E.E."/>
            <person name="Adams M.D."/>
            <person name="Hunkapiller M.W."/>
            <person name="Myers E.W."/>
            <person name="Venter J.C."/>
        </authorList>
    </citation>
    <scope>NUCLEOTIDE SEQUENCE [LARGE SCALE GENOMIC DNA]</scope>
    <scope>VARIANT ARG-48</scope>
</reference>
<reference key="6">
    <citation type="journal article" date="2004" name="Genome Res.">
        <title>The status, quality, and expansion of the NIH full-length cDNA project: the Mammalian Gene Collection (MGC).</title>
        <authorList>
            <consortium name="The MGC Project Team"/>
        </authorList>
    </citation>
    <scope>NUCLEOTIDE SEQUENCE [LARGE SCALE MRNA] (ISOFORM 4)</scope>
    <scope>VARIANT ARG-48</scope>
    <source>
        <tissue>Placenta</tissue>
    </source>
</reference>
<reference key="7">
    <citation type="journal article" date="1998" name="J. Biol. Chem.">
        <title>Human ADAM 12 (meltrin alpha) is an active metalloprotease.</title>
        <authorList>
            <person name="Loechel F."/>
            <person name="Gilpin B.J."/>
            <person name="Engvall E."/>
            <person name="Albrechtsen R."/>
            <person name="Wewer U.M."/>
        </authorList>
    </citation>
    <scope>CHARACTERIZATION</scope>
</reference>
<reference key="8">
    <citation type="journal article" date="2000" name="J. Cell Biol.">
        <title>The cysteine-rich domain of human ADAM 12 supports cell adhesion through syndecans and triggers signaling events that lead to beta1 integrin-dependent cell spreading.</title>
        <authorList>
            <person name="Iba K."/>
            <person name="Albrechtsen R."/>
            <person name="Gilpin B.J."/>
            <person name="Froehlich C."/>
            <person name="Loechel F."/>
            <person name="Zolkiewska A."/>
            <person name="Ishiguro K."/>
            <person name="Kojima T."/>
            <person name="Liu W."/>
            <person name="Langford J.K."/>
            <person name="Sanderson R.D."/>
            <person name="Brakebusch C."/>
            <person name="Faessler R."/>
            <person name="Wewer U.M."/>
        </authorList>
    </citation>
    <scope>INTERACTION WITH SYNDECANS</scope>
</reference>
<reference key="9">
    <citation type="journal article" date="2003" name="J. Biol. Chem.">
        <title>The adaptor protein fish associates with members of the ADAMs family and localizes to podosomes of Src-transformed cells.</title>
        <authorList>
            <person name="Abram C.L."/>
            <person name="Seals D.F."/>
            <person name="Pass I."/>
            <person name="Salinsky D."/>
            <person name="Maurer L."/>
            <person name="Roth T.M."/>
            <person name="Courtneidge S.A."/>
        </authorList>
    </citation>
    <scope>INTERACTION WITH SH3PXD2A</scope>
</reference>
<reference key="10">
    <citation type="journal article" date="2005" name="Biol. Cell">
        <title>FLRG, a new ADAM12-associated protein, modulates osteoclast differentiation.</title>
        <authorList>
            <person name="Bartholin L."/>
            <person name="Destaing O."/>
            <person name="Forissier S."/>
            <person name="Martel S."/>
            <person name="Maguer-Satta V."/>
            <person name="Jurdic P."/>
            <person name="Rimokh R."/>
        </authorList>
    </citation>
    <scope>INTERACTION WITH FST3</scope>
</reference>
<reference key="11">
    <citation type="journal article" date="2008" name="J. Biol. Chem.">
        <title>RACK1, a new ADAM12 interacting protein. Contribution to liver fibrogenesis.</title>
        <authorList>
            <person name="Bourd-Boittin K."/>
            <person name="Le Pabic H."/>
            <person name="Bonnier D."/>
            <person name="L'Helgoualc'h A."/>
            <person name="Theret N."/>
        </authorList>
    </citation>
    <scope>INTERACTION WITH RACK1</scope>
</reference>
<reference key="12">
    <citation type="journal article" date="2006" name="Science">
        <title>The consensus coding sequences of human breast and colorectal cancers.</title>
        <authorList>
            <person name="Sjoeblom T."/>
            <person name="Jones S."/>
            <person name="Wood L.D."/>
            <person name="Parsons D.W."/>
            <person name="Lin J."/>
            <person name="Barber T.D."/>
            <person name="Mandelker D."/>
            <person name="Leary R.J."/>
            <person name="Ptak J."/>
            <person name="Silliman N."/>
            <person name="Szabo S."/>
            <person name="Buckhaults P."/>
            <person name="Farrell C."/>
            <person name="Meeh P."/>
            <person name="Markowitz S.D."/>
            <person name="Willis J."/>
            <person name="Dawson D."/>
            <person name="Willson J.K.V."/>
            <person name="Gazdar A.F."/>
            <person name="Hartigan J."/>
            <person name="Wu L."/>
            <person name="Liu C."/>
            <person name="Parmigiani G."/>
            <person name="Park B.H."/>
            <person name="Bachman K.E."/>
            <person name="Papadopoulos N."/>
            <person name="Vogelstein B."/>
            <person name="Kinzler K.W."/>
            <person name="Velculescu V.E."/>
        </authorList>
    </citation>
    <scope>VARIANTS [LARGE SCALE ANALYSIS] HIS-301; GLU-479 AND PHE-792</scope>
</reference>
<reference key="13">
    <citation type="journal article" date="2011" name="Hum. Mutat.">
        <title>Analysis of the disintegrin-metalloproteinases family reveals ADAM29 and ADAM7 are often mutated in melanoma.</title>
        <authorList>
            <person name="Wei X."/>
            <person name="Moncada-Pazos A."/>
            <person name="Cal S."/>
            <person name="Soria-Valles C."/>
            <person name="Gartner J."/>
            <person name="Rudloff U."/>
            <person name="Lin J.C."/>
            <person name="Rosenberg S.A."/>
            <person name="Lopez-Otin C."/>
            <person name="Samuels Y."/>
        </authorList>
    </citation>
    <scope>VARIANTS GLU-712 AND SER-893</scope>
</reference>
<gene>
    <name type="primary">ADAM12</name>
    <name type="synonym">MLTN</name>
    <name type="ORF">UNQ346/PRO545</name>
</gene>
<accession>O43184</accession>
<accession>O60470</accession>
<accession>Q5JRP0</accession>
<accession>Q5JRP1</accession>
<accession>Q6P9E3</accession>
<accession>Q6UWB0</accession>
<evidence type="ECO:0000250" key="1"/>
<evidence type="ECO:0000255" key="2"/>
<evidence type="ECO:0000255" key="3">
    <source>
        <dbReference type="PROSITE-ProRule" id="PRU00068"/>
    </source>
</evidence>
<evidence type="ECO:0000255" key="4">
    <source>
        <dbReference type="PROSITE-ProRule" id="PRU00076"/>
    </source>
</evidence>
<evidence type="ECO:0000255" key="5">
    <source>
        <dbReference type="PROSITE-ProRule" id="PRU00276"/>
    </source>
</evidence>
<evidence type="ECO:0000256" key="6">
    <source>
        <dbReference type="SAM" id="MobiDB-lite"/>
    </source>
</evidence>
<evidence type="ECO:0000269" key="7">
    <source>
    </source>
</evidence>
<evidence type="ECO:0000269" key="8">
    <source>
    </source>
</evidence>
<evidence type="ECO:0000269" key="9">
    <source>
    </source>
</evidence>
<evidence type="ECO:0000269" key="10">
    <source>
    </source>
</evidence>
<evidence type="ECO:0000269" key="11">
    <source>
    </source>
</evidence>
<evidence type="ECO:0000269" key="12">
    <source>
    </source>
</evidence>
<evidence type="ECO:0000269" key="13">
    <source>
    </source>
</evidence>
<evidence type="ECO:0000269" key="14">
    <source>
    </source>
</evidence>
<evidence type="ECO:0000269" key="15">
    <source>
    </source>
</evidence>
<evidence type="ECO:0000269" key="16">
    <source ref="5"/>
</evidence>
<evidence type="ECO:0000303" key="17">
    <source>
    </source>
</evidence>
<evidence type="ECO:0000303" key="18">
    <source>
    </source>
</evidence>
<evidence type="ECO:0000303" key="19">
    <source>
    </source>
</evidence>
<evidence type="ECO:0000305" key="20"/>
<protein>
    <recommendedName>
        <fullName>Disintegrin and metalloproteinase domain-containing protein 12</fullName>
        <shortName>ADAM 12</shortName>
        <ecNumber>3.4.24.-</ecNumber>
    </recommendedName>
    <alternativeName>
        <fullName>Meltrin-alpha</fullName>
    </alternativeName>
</protein>
<dbReference type="EC" id="3.4.24.-"/>
<dbReference type="EMBL" id="AF023476">
    <property type="protein sequence ID" value="AAC08702.2"/>
    <property type="molecule type" value="mRNA"/>
</dbReference>
<dbReference type="EMBL" id="AF023477">
    <property type="protein sequence ID" value="AAC08703.2"/>
    <property type="molecule type" value="mRNA"/>
</dbReference>
<dbReference type="EMBL" id="AY358878">
    <property type="protein sequence ID" value="AAQ89237.1"/>
    <property type="molecule type" value="mRNA"/>
</dbReference>
<dbReference type="EMBL" id="AC022015">
    <property type="status" value="NOT_ANNOTATED_CDS"/>
    <property type="molecule type" value="Genomic_DNA"/>
</dbReference>
<dbReference type="EMBL" id="AC026226">
    <property type="status" value="NOT_ANNOTATED_CDS"/>
    <property type="molecule type" value="Genomic_DNA"/>
</dbReference>
<dbReference type="EMBL" id="AC063963">
    <property type="status" value="NOT_ANNOTATED_CDS"/>
    <property type="molecule type" value="Genomic_DNA"/>
</dbReference>
<dbReference type="EMBL" id="AL589787">
    <property type="status" value="NOT_ANNOTATED_CDS"/>
    <property type="molecule type" value="Genomic_DNA"/>
</dbReference>
<dbReference type="EMBL" id="CH471066">
    <property type="protein sequence ID" value="EAW49206.1"/>
    <property type="molecule type" value="Genomic_DNA"/>
</dbReference>
<dbReference type="EMBL" id="CH471066">
    <property type="protein sequence ID" value="EAW49209.1"/>
    <property type="molecule type" value="Genomic_DNA"/>
</dbReference>
<dbReference type="EMBL" id="BC060804">
    <property type="protein sequence ID" value="AAH60804.1"/>
    <property type="molecule type" value="mRNA"/>
</dbReference>
<dbReference type="CCDS" id="CCDS7653.1">
    <molecule id="O43184-1"/>
</dbReference>
<dbReference type="CCDS" id="CCDS7654.1">
    <molecule id="O43184-2"/>
</dbReference>
<dbReference type="RefSeq" id="NP_001275903.1">
    <molecule id="O43184-4"/>
    <property type="nucleotide sequence ID" value="NM_001288974.2"/>
</dbReference>
<dbReference type="RefSeq" id="NP_001275904.1">
    <molecule id="O43184-3"/>
    <property type="nucleotide sequence ID" value="NM_001288975.2"/>
</dbReference>
<dbReference type="RefSeq" id="NP_003465.3">
    <molecule id="O43184-1"/>
    <property type="nucleotide sequence ID" value="NM_003474.5"/>
</dbReference>
<dbReference type="RefSeq" id="NP_067673.2">
    <molecule id="O43184-2"/>
    <property type="nucleotide sequence ID" value="NM_021641.5"/>
</dbReference>
<dbReference type="SMR" id="O43184"/>
<dbReference type="BioGRID" id="113731">
    <property type="interactions" value="43"/>
</dbReference>
<dbReference type="CORUM" id="O43184"/>
<dbReference type="FunCoup" id="O43184">
    <property type="interactions" value="868"/>
</dbReference>
<dbReference type="IntAct" id="O43184">
    <property type="interactions" value="47"/>
</dbReference>
<dbReference type="MINT" id="O43184"/>
<dbReference type="STRING" id="9606.ENSP00000357668"/>
<dbReference type="BindingDB" id="O43184"/>
<dbReference type="ChEMBL" id="CHEMBL5030"/>
<dbReference type="GuidetoPHARMACOLOGY" id="1660"/>
<dbReference type="MEROPS" id="M12.212"/>
<dbReference type="TCDB" id="8.A.77.1.5">
    <property type="family name" value="the sheddase (sheddase) family"/>
</dbReference>
<dbReference type="CarbonylDB" id="O43184"/>
<dbReference type="GlyCosmos" id="O43184">
    <property type="glycosylation" value="5 sites, No reported glycans"/>
</dbReference>
<dbReference type="GlyGen" id="O43184">
    <property type="glycosylation" value="6 sites, 1 O-linked glycan (1 site)"/>
</dbReference>
<dbReference type="iPTMnet" id="O43184"/>
<dbReference type="PhosphoSitePlus" id="O43184"/>
<dbReference type="BioMuta" id="ADAM12"/>
<dbReference type="MassIVE" id="O43184"/>
<dbReference type="PaxDb" id="9606-ENSP00000357668"/>
<dbReference type="PeptideAtlas" id="O43184"/>
<dbReference type="ProteomicsDB" id="48799">
    <molecule id="O43184-1"/>
</dbReference>
<dbReference type="ProteomicsDB" id="48800">
    <molecule id="O43184-2"/>
</dbReference>
<dbReference type="ProteomicsDB" id="48801">
    <molecule id="O43184-3"/>
</dbReference>
<dbReference type="ProteomicsDB" id="48802">
    <molecule id="O43184-4"/>
</dbReference>
<dbReference type="Antibodypedia" id="19223">
    <property type="antibodies" value="458 antibodies from 40 providers"/>
</dbReference>
<dbReference type="DNASU" id="8038"/>
<dbReference type="Ensembl" id="ENST00000368676.8">
    <molecule id="O43184-2"/>
    <property type="protein sequence ID" value="ENSP00000357665.4"/>
    <property type="gene ID" value="ENSG00000148848.15"/>
</dbReference>
<dbReference type="Ensembl" id="ENST00000368679.8">
    <molecule id="O43184-1"/>
    <property type="protein sequence ID" value="ENSP00000357668.4"/>
    <property type="gene ID" value="ENSG00000148848.15"/>
</dbReference>
<dbReference type="GeneID" id="8038"/>
<dbReference type="KEGG" id="hsa:8038"/>
<dbReference type="UCSC" id="uc001ljk.4">
    <molecule id="O43184-1"/>
    <property type="organism name" value="human"/>
</dbReference>
<dbReference type="AGR" id="HGNC:190"/>
<dbReference type="CTD" id="8038"/>
<dbReference type="DisGeNET" id="8038"/>
<dbReference type="GeneCards" id="ADAM12"/>
<dbReference type="HGNC" id="HGNC:190">
    <property type="gene designation" value="ADAM12"/>
</dbReference>
<dbReference type="HPA" id="ENSG00000148848">
    <property type="expression patterns" value="Tissue enriched (placenta)"/>
</dbReference>
<dbReference type="MIM" id="602714">
    <property type="type" value="gene"/>
</dbReference>
<dbReference type="neXtProt" id="NX_O43184"/>
<dbReference type="OpenTargets" id="ENSG00000148848"/>
<dbReference type="PharmGKB" id="PA24507"/>
<dbReference type="VEuPathDB" id="HostDB:ENSG00000148848"/>
<dbReference type="eggNOG" id="KOG3607">
    <property type="taxonomic scope" value="Eukaryota"/>
</dbReference>
<dbReference type="GeneTree" id="ENSGT00940000155495"/>
<dbReference type="HOGENOM" id="CLU_012714_7_0_1"/>
<dbReference type="InParanoid" id="O43184"/>
<dbReference type="OMA" id="SYMLEPC"/>
<dbReference type="OrthoDB" id="5951731at2759"/>
<dbReference type="PAN-GO" id="O43184">
    <property type="GO annotations" value="1 GO annotation based on evolutionary models"/>
</dbReference>
<dbReference type="PhylomeDB" id="O43184"/>
<dbReference type="TreeFam" id="TF314733"/>
<dbReference type="BRENDA" id="3.4.24.B10">
    <property type="organism ID" value="2681"/>
</dbReference>
<dbReference type="PathwayCommons" id="O43184"/>
<dbReference type="Reactome" id="R-HSA-177929">
    <property type="pathway name" value="Signaling by EGFR"/>
</dbReference>
<dbReference type="Reactome" id="R-HSA-8941237">
    <property type="pathway name" value="Invadopodia formation"/>
</dbReference>
<dbReference type="SignaLink" id="O43184"/>
<dbReference type="SIGNOR" id="O43184"/>
<dbReference type="BioGRID-ORCS" id="8038">
    <property type="hits" value="11 hits in 1155 CRISPR screens"/>
</dbReference>
<dbReference type="ChiTaRS" id="ADAM12">
    <property type="organism name" value="human"/>
</dbReference>
<dbReference type="GeneWiki" id="ADAM12"/>
<dbReference type="GenomeRNAi" id="8038"/>
<dbReference type="Pharos" id="O43184">
    <property type="development level" value="Tchem"/>
</dbReference>
<dbReference type="PRO" id="PR:O43184"/>
<dbReference type="Proteomes" id="UP000005640">
    <property type="component" value="Chromosome 10"/>
</dbReference>
<dbReference type="RNAct" id="O43184">
    <property type="molecule type" value="protein"/>
</dbReference>
<dbReference type="Bgee" id="ENSG00000148848">
    <property type="expression patterns" value="Expressed in placenta and 143 other cell types or tissues"/>
</dbReference>
<dbReference type="ExpressionAtlas" id="O43184">
    <property type="expression patterns" value="baseline and differential"/>
</dbReference>
<dbReference type="GO" id="GO:0005576">
    <property type="term" value="C:extracellular region"/>
    <property type="evidence" value="ECO:0007669"/>
    <property type="project" value="UniProtKB-SubCell"/>
</dbReference>
<dbReference type="GO" id="GO:0005654">
    <property type="term" value="C:nucleoplasm"/>
    <property type="evidence" value="ECO:0000314"/>
    <property type="project" value="HPA"/>
</dbReference>
<dbReference type="GO" id="GO:0005886">
    <property type="term" value="C:plasma membrane"/>
    <property type="evidence" value="ECO:0000314"/>
    <property type="project" value="BHF-UCL"/>
</dbReference>
<dbReference type="GO" id="GO:0046872">
    <property type="term" value="F:metal ion binding"/>
    <property type="evidence" value="ECO:0007669"/>
    <property type="project" value="UniProtKB-KW"/>
</dbReference>
<dbReference type="GO" id="GO:0004222">
    <property type="term" value="F:metalloendopeptidase activity"/>
    <property type="evidence" value="ECO:0000318"/>
    <property type="project" value="GO_Central"/>
</dbReference>
<dbReference type="GO" id="GO:0008237">
    <property type="term" value="F:metallopeptidase activity"/>
    <property type="evidence" value="ECO:0000304"/>
    <property type="project" value="ProtInc"/>
</dbReference>
<dbReference type="GO" id="GO:0017124">
    <property type="term" value="F:SH3 domain binding"/>
    <property type="evidence" value="ECO:0000353"/>
    <property type="project" value="BHF-UCL"/>
</dbReference>
<dbReference type="GO" id="GO:0007155">
    <property type="term" value="P:cell adhesion"/>
    <property type="evidence" value="ECO:0007669"/>
    <property type="project" value="UniProtKB-KW"/>
</dbReference>
<dbReference type="GO" id="GO:0007520">
    <property type="term" value="P:myoblast fusion"/>
    <property type="evidence" value="ECO:0000304"/>
    <property type="project" value="ProtInc"/>
</dbReference>
<dbReference type="GO" id="GO:0045766">
    <property type="term" value="P:positive regulation of angiogenesis"/>
    <property type="evidence" value="ECO:0000315"/>
    <property type="project" value="BHF-UCL"/>
</dbReference>
<dbReference type="GO" id="GO:0006508">
    <property type="term" value="P:proteolysis"/>
    <property type="evidence" value="ECO:0000318"/>
    <property type="project" value="GO_Central"/>
</dbReference>
<dbReference type="CDD" id="cd04269">
    <property type="entry name" value="ZnMc_adamalysin_II_like"/>
    <property type="match status" value="1"/>
</dbReference>
<dbReference type="FunFam" id="3.40.390.10:FF:000002">
    <property type="entry name" value="Disintegrin and metalloproteinase domain-containing protein 22"/>
    <property type="match status" value="1"/>
</dbReference>
<dbReference type="FunFam" id="4.10.70.10:FF:000001">
    <property type="entry name" value="Disintegrin and metalloproteinase domain-containing protein 22"/>
    <property type="match status" value="1"/>
</dbReference>
<dbReference type="Gene3D" id="3.40.390.10">
    <property type="entry name" value="Collagenase (Catalytic Domain)"/>
    <property type="match status" value="1"/>
</dbReference>
<dbReference type="Gene3D" id="4.10.70.10">
    <property type="entry name" value="Disintegrin domain"/>
    <property type="match status" value="1"/>
</dbReference>
<dbReference type="InterPro" id="IPR006586">
    <property type="entry name" value="ADAM_Cys-rich"/>
</dbReference>
<dbReference type="InterPro" id="IPR018358">
    <property type="entry name" value="Disintegrin_CS"/>
</dbReference>
<dbReference type="InterPro" id="IPR001762">
    <property type="entry name" value="Disintegrin_dom"/>
</dbReference>
<dbReference type="InterPro" id="IPR036436">
    <property type="entry name" value="Disintegrin_dom_sf"/>
</dbReference>
<dbReference type="InterPro" id="IPR000742">
    <property type="entry name" value="EGF-like_dom"/>
</dbReference>
<dbReference type="InterPro" id="IPR024079">
    <property type="entry name" value="MetalloPept_cat_dom_sf"/>
</dbReference>
<dbReference type="InterPro" id="IPR001590">
    <property type="entry name" value="Peptidase_M12B"/>
</dbReference>
<dbReference type="InterPro" id="IPR002870">
    <property type="entry name" value="Peptidase_M12B_N"/>
</dbReference>
<dbReference type="InterPro" id="IPR034027">
    <property type="entry name" value="Reprolysin_adamalysin"/>
</dbReference>
<dbReference type="PANTHER" id="PTHR11905">
    <property type="entry name" value="ADAM A DISINTEGRIN AND METALLOPROTEASE DOMAIN"/>
    <property type="match status" value="1"/>
</dbReference>
<dbReference type="PANTHER" id="PTHR11905:SF112">
    <property type="entry name" value="DISINTEGRIN AND METALLOPROTEINASE DOMAIN-CONTAINING PROTEIN 12"/>
    <property type="match status" value="1"/>
</dbReference>
<dbReference type="Pfam" id="PF08516">
    <property type="entry name" value="ADAM_CR"/>
    <property type="match status" value="1"/>
</dbReference>
<dbReference type="Pfam" id="PF00200">
    <property type="entry name" value="Disintegrin"/>
    <property type="match status" value="1"/>
</dbReference>
<dbReference type="Pfam" id="PF01562">
    <property type="entry name" value="Pep_M12B_propep"/>
    <property type="match status" value="1"/>
</dbReference>
<dbReference type="Pfam" id="PF01421">
    <property type="entry name" value="Reprolysin"/>
    <property type="match status" value="1"/>
</dbReference>
<dbReference type="PRINTS" id="PR00289">
    <property type="entry name" value="DISINTEGRIN"/>
</dbReference>
<dbReference type="SMART" id="SM00608">
    <property type="entry name" value="ACR"/>
    <property type="match status" value="1"/>
</dbReference>
<dbReference type="SMART" id="SM00050">
    <property type="entry name" value="DISIN"/>
    <property type="match status" value="1"/>
</dbReference>
<dbReference type="SUPFAM" id="SSF57552">
    <property type="entry name" value="Blood coagulation inhibitor (disintegrin)"/>
    <property type="match status" value="1"/>
</dbReference>
<dbReference type="SUPFAM" id="SSF55486">
    <property type="entry name" value="Metalloproteases ('zincins'), catalytic domain"/>
    <property type="match status" value="1"/>
</dbReference>
<dbReference type="PROSITE" id="PS50215">
    <property type="entry name" value="ADAM_MEPRO"/>
    <property type="match status" value="1"/>
</dbReference>
<dbReference type="PROSITE" id="PS00427">
    <property type="entry name" value="DISINTEGRIN_1"/>
    <property type="match status" value="1"/>
</dbReference>
<dbReference type="PROSITE" id="PS50214">
    <property type="entry name" value="DISINTEGRIN_2"/>
    <property type="match status" value="1"/>
</dbReference>
<dbReference type="PROSITE" id="PS50026">
    <property type="entry name" value="EGF_3"/>
    <property type="match status" value="1"/>
</dbReference>
<dbReference type="PROSITE" id="PS00142">
    <property type="entry name" value="ZINC_PROTEASE"/>
    <property type="match status" value="1"/>
</dbReference>
<keyword id="KW-0025">Alternative splicing</keyword>
<keyword id="KW-0130">Cell adhesion</keyword>
<keyword id="KW-1003">Cell membrane</keyword>
<keyword id="KW-0165">Cleavage on pair of basic residues</keyword>
<keyword id="KW-1015">Disulfide bond</keyword>
<keyword id="KW-0245">EGF-like domain</keyword>
<keyword id="KW-0325">Glycoprotein</keyword>
<keyword id="KW-0378">Hydrolase</keyword>
<keyword id="KW-0472">Membrane</keyword>
<keyword id="KW-0479">Metal-binding</keyword>
<keyword id="KW-0482">Metalloprotease</keyword>
<keyword id="KW-0597">Phosphoprotein</keyword>
<keyword id="KW-0645">Protease</keyword>
<keyword id="KW-1267">Proteomics identification</keyword>
<keyword id="KW-1185">Reference proteome</keyword>
<keyword id="KW-0964">Secreted</keyword>
<keyword id="KW-0729">SH3-binding</keyword>
<keyword id="KW-0732">Signal</keyword>
<keyword id="KW-0812">Transmembrane</keyword>
<keyword id="KW-1133">Transmembrane helix</keyword>
<keyword id="KW-0862">Zinc</keyword>
<keyword id="KW-0865">Zymogen</keyword>
<name>ADA12_HUMAN</name>
<comment type="function">
    <text evidence="1">Involved in skeletal muscle regeneration, specifically at the onset of cell fusion. Also involved in macrophage-derived giant cells (MGC) and osteoclast formation from mononuclear precursors (By similarity).</text>
</comment>
<comment type="cofactor">
    <cofactor>
        <name>Zn(2+)</name>
        <dbReference type="ChEBI" id="CHEBI:29105"/>
    </cofactor>
    <text>Binds 1 zinc ion per subunit.</text>
</comment>
<comment type="subunit">
    <text evidence="1 7 8 11 13">Interacts with alpha-actinin-2 and with syndecans (By similarity). Interacts with SH3PXD2A. Interacts with FST3. Interacts with RACK1; the interaction is required for PKC-dependent translocation of ADAM12 to the cell membrane.</text>
</comment>
<comment type="interaction">
    <interactant intactId="EBI-2625825">
        <id>O43184</id>
    </interactant>
    <interactant intactId="EBI-1049056">
        <id>Q8N157</id>
        <label>AHI1</label>
    </interactant>
    <organismsDiffer>false</organismsDiffer>
    <experiments>2</experiments>
</comment>
<comment type="interaction">
    <interactant intactId="EBI-2625825">
        <id>O43184</id>
    </interactant>
    <interactant intactId="EBI-346340">
        <id>P08631</id>
        <label>HCK</label>
    </interactant>
    <organismsDiffer>false</organismsDiffer>
    <experiments>2</experiments>
</comment>
<comment type="interaction">
    <interactant intactId="EBI-2625825">
        <id>O43184</id>
    </interactant>
    <interactant intactId="EBI-79452">
        <id>P07948</id>
        <label>LYN</label>
    </interactant>
    <organismsDiffer>false</organismsDiffer>
    <experiments>2</experiments>
</comment>
<comment type="interaction">
    <interactant intactId="EBI-2625825">
        <id>O43184</id>
    </interactant>
    <interactant intactId="EBI-621482">
        <id>P12931</id>
        <label>SRC</label>
    </interactant>
    <organismsDiffer>false</organismsDiffer>
    <experiments>2</experiments>
</comment>
<comment type="interaction">
    <interactant intactId="EBI-2625865">
        <id>O43184-2</id>
    </interactant>
    <interactant intactId="EBI-2625790">
        <id>O95633</id>
        <label>FSTL3</label>
    </interactant>
    <organismsDiffer>false</organismsDiffer>
    <experiments>4</experiments>
</comment>
<comment type="interaction">
    <interactant intactId="EBI-12006944">
        <id>O43184-4</id>
    </interactant>
    <interactant intactId="EBI-10173507">
        <id>Q6UY14-3</id>
        <label>ADAMTSL4</label>
    </interactant>
    <organismsDiffer>false</organismsDiffer>
    <experiments>3</experiments>
</comment>
<comment type="interaction">
    <interactant intactId="EBI-12006944">
        <id>O43184-4</id>
    </interactant>
    <interactant intactId="EBI-3867333">
        <id>A8MQ03</id>
        <label>CYSRT1</label>
    </interactant>
    <organismsDiffer>false</organismsDiffer>
    <experiments>6</experiments>
</comment>
<comment type="interaction">
    <interactant intactId="EBI-12006944">
        <id>O43184-4</id>
    </interactant>
    <interactant intactId="EBI-12260294">
        <id>Q9NQ30</id>
        <label>ESM1</label>
    </interactant>
    <organismsDiffer>false</organismsDiffer>
    <experiments>3</experiments>
</comment>
<comment type="interaction">
    <interactant intactId="EBI-12006944">
        <id>O43184-4</id>
    </interactant>
    <interactant intactId="EBI-750641">
        <id>Q5TD97</id>
        <label>FHL5</label>
    </interactant>
    <organismsDiffer>false</organismsDiffer>
    <experiments>3</experiments>
</comment>
<comment type="interaction">
    <interactant intactId="EBI-12006944">
        <id>O43184-4</id>
    </interactant>
    <interactant intactId="EBI-11978177">
        <id>Q96NT3-2</id>
        <label>GUCD1</label>
    </interactant>
    <organismsDiffer>false</organismsDiffer>
    <experiments>3</experiments>
</comment>
<comment type="interaction">
    <interactant intactId="EBI-12006944">
        <id>O43184-4</id>
    </interactant>
    <interactant intactId="EBI-740785">
        <id>P49639</id>
        <label>HOXA1</label>
    </interactant>
    <organismsDiffer>false</organismsDiffer>
    <experiments>3</experiments>
</comment>
<comment type="interaction">
    <interactant intactId="EBI-12006944">
        <id>O43184-4</id>
    </interactant>
    <interactant intactId="EBI-10221390">
        <id>P78385</id>
        <label>KRT83</label>
    </interactant>
    <organismsDiffer>false</organismsDiffer>
    <experiments>3</experiments>
</comment>
<comment type="interaction">
    <interactant intactId="EBI-12006944">
        <id>O43184-4</id>
    </interactant>
    <interactant intactId="EBI-11959885">
        <id>Q07627</id>
        <label>KRTAP1-1</label>
    </interactant>
    <organismsDiffer>false</organismsDiffer>
    <experiments>3</experiments>
</comment>
<comment type="interaction">
    <interactant intactId="EBI-12006944">
        <id>O43184-4</id>
    </interactant>
    <interactant intactId="EBI-11749135">
        <id>Q8IUG1</id>
        <label>KRTAP1-3</label>
    </interactant>
    <organismsDiffer>false</organismsDiffer>
    <experiments>3</experiments>
</comment>
<comment type="interaction">
    <interactant intactId="EBI-12006944">
        <id>O43184-4</id>
    </interactant>
    <interactant intactId="EBI-10171774">
        <id>P60410</id>
        <label>KRTAP10-8</label>
    </interactant>
    <organismsDiffer>false</organismsDiffer>
    <experiments>5</experiments>
</comment>
<comment type="interaction">
    <interactant intactId="EBI-12006944">
        <id>O43184-4</id>
    </interactant>
    <interactant intactId="EBI-10176379">
        <id>P59991</id>
        <label>KRTAP12-2</label>
    </interactant>
    <organismsDiffer>false</organismsDiffer>
    <experiments>3</experiments>
</comment>
<comment type="interaction">
    <interactant intactId="EBI-12006944">
        <id>O43184-4</id>
    </interactant>
    <interactant intactId="EBI-9996449">
        <id>Q9BYR8</id>
        <label>KRTAP3-1</label>
    </interactant>
    <organismsDiffer>false</organismsDiffer>
    <experiments>5</experiments>
</comment>
<comment type="interaction">
    <interactant intactId="EBI-12006944">
        <id>O43184-4</id>
    </interactant>
    <interactant intactId="EBI-751260">
        <id>Q9BYR7</id>
        <label>KRTAP3-2</label>
    </interactant>
    <organismsDiffer>false</organismsDiffer>
    <experiments>3</experiments>
</comment>
<comment type="interaction">
    <interactant intactId="EBI-12006944">
        <id>O43184-4</id>
    </interactant>
    <interactant intactId="EBI-739863">
        <id>Q9BQ66</id>
        <label>KRTAP4-12</label>
    </interactant>
    <organismsDiffer>false</organismsDiffer>
    <experiments>3</experiments>
</comment>
<comment type="interaction">
    <interactant intactId="EBI-12006944">
        <id>O43184-4</id>
    </interactant>
    <interactant intactId="EBI-10250562">
        <id>Q6L8G9</id>
        <label>KRTAP5-6</label>
    </interactant>
    <organismsDiffer>false</organismsDiffer>
    <experiments>3</experiments>
</comment>
<comment type="interaction">
    <interactant intactId="EBI-12006944">
        <id>O43184-4</id>
    </interactant>
    <interactant intactId="EBI-3958099">
        <id>P26371</id>
        <label>KRTAP5-9</label>
    </interactant>
    <organismsDiffer>false</organismsDiffer>
    <experiments>3</experiments>
</comment>
<comment type="interaction">
    <interactant intactId="EBI-12006944">
        <id>O43184-4</id>
    </interactant>
    <interactant intactId="EBI-11962084">
        <id>Q3LI66</id>
        <label>KRTAP6-2</label>
    </interactant>
    <organismsDiffer>false</organismsDiffer>
    <experiments>3</experiments>
</comment>
<comment type="interaction">
    <interactant intactId="EBI-12006944">
        <id>O43184-4</id>
    </interactant>
    <interactant intactId="EBI-1044640">
        <id>Q9BYQ4</id>
        <label>KRTAP9-2</label>
    </interactant>
    <organismsDiffer>false</organismsDiffer>
    <experiments>5</experiments>
</comment>
<comment type="interaction">
    <interactant intactId="EBI-12006944">
        <id>O43184-4</id>
    </interactant>
    <interactant intactId="EBI-11958364">
        <id>Q9BYQ0</id>
        <label>KRTAP9-8</label>
    </interactant>
    <organismsDiffer>false</organismsDiffer>
    <experiments>3</experiments>
</comment>
<comment type="interaction">
    <interactant intactId="EBI-12006944">
        <id>O43184-4</id>
    </interactant>
    <interactant intactId="EBI-11955689">
        <id>Q5TCM9</id>
        <label>LCE5A</label>
    </interactant>
    <organismsDiffer>false</organismsDiffer>
    <experiments>3</experiments>
</comment>
<comment type="interaction">
    <interactant intactId="EBI-12006944">
        <id>O43184-4</id>
    </interactant>
    <interactant intactId="EBI-947402">
        <id>O60336</id>
        <label>MAPKBP1</label>
    </interactant>
    <organismsDiffer>false</organismsDiffer>
    <experiments>3</experiments>
</comment>
<comment type="interaction">
    <interactant intactId="EBI-12006944">
        <id>O43184-4</id>
    </interactant>
    <interactant intactId="EBI-22310682">
        <id>P0DPK4</id>
        <label>NOTCH2NLC</label>
    </interactant>
    <organismsDiffer>false</organismsDiffer>
    <experiments>3</experiments>
</comment>
<comment type="interaction">
    <interactant intactId="EBI-12006944">
        <id>O43184-4</id>
    </interactant>
    <interactant intactId="EBI-740446">
        <id>P32242</id>
        <label>OTX1</label>
    </interactant>
    <organismsDiffer>false</organismsDiffer>
    <experiments>3</experiments>
</comment>
<comment type="interaction">
    <interactant intactId="EBI-12006944">
        <id>O43184-4</id>
    </interactant>
    <interactant intactId="EBI-10253121">
        <id>Q6P9E2</id>
        <label>RECK</label>
    </interactant>
    <organismsDiffer>false</organismsDiffer>
    <experiments>3</experiments>
</comment>
<comment type="interaction">
    <interactant intactId="EBI-12006944">
        <id>O43184-4</id>
    </interactant>
    <interactant intactId="EBI-12806032">
        <id>Q16348</id>
        <label>SLC15A2</label>
    </interactant>
    <organismsDiffer>false</organismsDiffer>
    <experiments>3</experiments>
</comment>
<comment type="interaction">
    <interactant intactId="EBI-12006944">
        <id>O43184-4</id>
    </interactant>
    <interactant intactId="EBI-3866665">
        <id>O43609</id>
        <label>SPRY1</label>
    </interactant>
    <organismsDiffer>false</organismsDiffer>
    <experiments>4</experiments>
</comment>
<comment type="interaction">
    <interactant intactId="EBI-12006944">
        <id>O43184-4</id>
    </interactant>
    <interactant intactId="EBI-354861">
        <id>Q9C004</id>
        <label>SPRY4</label>
    </interactant>
    <organismsDiffer>false</organismsDiffer>
    <experiments>3</experiments>
</comment>
<comment type="interaction">
    <interactant intactId="EBI-12006944">
        <id>O43184-4</id>
    </interactant>
    <interactant intactId="EBI-11952651">
        <id>Q7Z6R9</id>
        <label>TFAP2D</label>
    </interactant>
    <organismsDiffer>false</organismsDiffer>
    <experiments>3</experiments>
</comment>
<comment type="subcellular location">
    <molecule>Isoform 1</molecule>
    <subcellularLocation>
        <location>Cell membrane</location>
        <topology>Single-pass type I membrane protein</topology>
    </subcellularLocation>
</comment>
<comment type="subcellular location">
    <molecule>Isoform 2</molecule>
    <subcellularLocation>
        <location>Secreted</location>
    </subcellularLocation>
</comment>
<comment type="subcellular location">
    <molecule>Isoform 3</molecule>
    <subcellularLocation>
        <location evidence="20">Secreted</location>
    </subcellularLocation>
</comment>
<comment type="subcellular location">
    <molecule>Isoform 4</molecule>
    <subcellularLocation>
        <location evidence="20">Secreted</location>
    </subcellularLocation>
</comment>
<comment type="alternative products">
    <event type="alternative splicing"/>
    <isoform>
        <id>O43184-1</id>
        <name>1</name>
        <name>12L</name>
        <sequence type="displayed"/>
    </isoform>
    <isoform>
        <id>O43184-2</id>
        <name>2</name>
        <name>12S</name>
        <sequence type="described" ref="VSP_005476 VSP_005477"/>
    </isoform>
    <isoform>
        <id>O43184-3</id>
        <name>3</name>
        <sequence type="described" ref="VSP_031001 VSP_005476 VSP_005477"/>
    </isoform>
    <isoform>
        <id>O43184-4</id>
        <name>4</name>
        <sequence type="described" ref="VSP_031001 VSP_031002 VSP_031003"/>
    </isoform>
</comment>
<comment type="tissue specificity">
    <text>Isoform 1 is expressed in placenta and skeletal, cardiac, and smooth muscle. Isoform 2 seems to be expressed only in placenta or in embryo and fetus. Both forms were expressed in some tumor cells lines. Not detected in brain, lung, liver, kidney or pancreas.</text>
</comment>
<comment type="domain">
    <text>The cysteine-rich domain supports cell adhesion through syndecans and triggers signaling events that lead to beta-1 integrin-dependent cell spreading. In carcinomas cells the binding of this domain to syndecans does not allow the integrin-mediated cell spreading.</text>
</comment>
<comment type="domain">
    <text>The conserved cysteine present in the cysteine-switch motif binds the catalytic zinc ion, thus inhibiting the enzyme. The dissociation of the cysteine from the zinc ion upon the activation-peptide release activates the enzyme.</text>
</comment>
<comment type="PTM">
    <text evidence="1">The precursor is cleaved by a furin endopeptidase.</text>
</comment>
<comment type="online information" name="Atlas of Genetics and Cytogenetics in Oncology and Haematology">
    <link uri="https://atlasgeneticsoncology.org/gene/44084/ADAM12"/>
</comment>
<organism>
    <name type="scientific">Homo sapiens</name>
    <name type="common">Human</name>
    <dbReference type="NCBI Taxonomy" id="9606"/>
    <lineage>
        <taxon>Eukaryota</taxon>
        <taxon>Metazoa</taxon>
        <taxon>Chordata</taxon>
        <taxon>Craniata</taxon>
        <taxon>Vertebrata</taxon>
        <taxon>Euteleostomi</taxon>
        <taxon>Mammalia</taxon>
        <taxon>Eutheria</taxon>
        <taxon>Euarchontoglires</taxon>
        <taxon>Primates</taxon>
        <taxon>Haplorrhini</taxon>
        <taxon>Catarrhini</taxon>
        <taxon>Hominidae</taxon>
        <taxon>Homo</taxon>
    </lineage>
</organism>
<feature type="signal peptide" evidence="2">
    <location>
        <begin position="1"/>
        <end position="28"/>
    </location>
</feature>
<feature type="propeptide" id="PRO_0000029078" evidence="1">
    <location>
        <begin position="29"/>
        <end position="207"/>
    </location>
</feature>
<feature type="chain" id="PRO_0000029079" description="Disintegrin and metalloproteinase domain-containing protein 12">
    <location>
        <begin position="208"/>
        <end position="909"/>
    </location>
</feature>
<feature type="topological domain" description="Extracellular" evidence="2">
    <location>
        <begin position="208"/>
        <end position="708"/>
    </location>
</feature>
<feature type="transmembrane region" description="Helical" evidence="2">
    <location>
        <begin position="709"/>
        <end position="729"/>
    </location>
</feature>
<feature type="topological domain" description="Cytoplasmic" evidence="2">
    <location>
        <begin position="730"/>
        <end position="909"/>
    </location>
</feature>
<feature type="domain" description="Peptidase M12B" evidence="5">
    <location>
        <begin position="214"/>
        <end position="416"/>
    </location>
</feature>
<feature type="domain" description="Disintegrin" evidence="3">
    <location>
        <begin position="424"/>
        <end position="510"/>
    </location>
</feature>
<feature type="domain" description="EGF-like" evidence="4">
    <location>
        <begin position="656"/>
        <end position="688"/>
    </location>
</feature>
<feature type="region of interest" description="Disordered" evidence="6">
    <location>
        <begin position="822"/>
        <end position="862"/>
    </location>
</feature>
<feature type="short sequence motif" description="Cysteine switch" evidence="1">
    <location>
        <begin position="177"/>
        <end position="184"/>
    </location>
</feature>
<feature type="short sequence motif" description="SH3-binding; class II" evidence="1">
    <location>
        <begin position="828"/>
        <end position="834"/>
    </location>
</feature>
<feature type="short sequence motif" description="SH3-binding; class I" evidence="1">
    <location>
        <begin position="834"/>
        <end position="841"/>
    </location>
</feature>
<feature type="short sequence motif" description="SH3-binding; class I" evidence="1">
    <location>
        <begin position="885"/>
        <end position="891"/>
    </location>
</feature>
<feature type="compositionally biased region" description="Pro residues" evidence="6">
    <location>
        <begin position="851"/>
        <end position="860"/>
    </location>
</feature>
<feature type="active site">
    <location>
        <position position="351"/>
    </location>
</feature>
<feature type="binding site" description="in inhibited form" evidence="1">
    <location>
        <position position="179"/>
    </location>
    <ligand>
        <name>Zn(2+)</name>
        <dbReference type="ChEBI" id="CHEBI:29105"/>
        <note>catalytic</note>
    </ligand>
</feature>
<feature type="binding site">
    <location>
        <position position="350"/>
    </location>
    <ligand>
        <name>Zn(2+)</name>
        <dbReference type="ChEBI" id="CHEBI:29105"/>
        <note>catalytic</note>
    </ligand>
</feature>
<feature type="binding site">
    <location>
        <position position="354"/>
    </location>
    <ligand>
        <name>Zn(2+)</name>
        <dbReference type="ChEBI" id="CHEBI:29105"/>
        <note>catalytic</note>
    </ligand>
</feature>
<feature type="binding site">
    <location>
        <position position="360"/>
    </location>
    <ligand>
        <name>Zn(2+)</name>
        <dbReference type="ChEBI" id="CHEBI:29105"/>
        <note>catalytic</note>
    </ligand>
</feature>
<feature type="modified residue" description="Phosphotyrosine; by SRC" evidence="1">
    <location>
        <position position="907"/>
    </location>
</feature>
<feature type="glycosylation site" description="N-linked (GlcNAc...) asparagine" evidence="2">
    <location>
        <position position="111"/>
    </location>
</feature>
<feature type="glycosylation site" description="N-linked (GlcNAc...) asparagine" evidence="2">
    <location>
        <position position="149"/>
    </location>
</feature>
<feature type="glycosylation site" description="N-linked (GlcNAc...) asparagine" evidence="2">
    <location>
        <position position="381"/>
    </location>
</feature>
<feature type="glycosylation site" description="N-linked (GlcNAc...) asparagine" evidence="2">
    <location>
        <position position="452"/>
    </location>
</feature>
<feature type="glycosylation site" description="N-linked (GlcNAc...) asparagine" evidence="2">
    <location>
        <position position="651"/>
    </location>
</feature>
<feature type="disulfide bond" evidence="1">
    <location>
        <begin position="325"/>
        <end position="411"/>
    </location>
</feature>
<feature type="disulfide bond" evidence="1">
    <location>
        <begin position="367"/>
        <end position="395"/>
    </location>
</feature>
<feature type="disulfide bond" evidence="1">
    <location>
        <begin position="369"/>
        <end position="378"/>
    </location>
</feature>
<feature type="disulfide bond" evidence="1">
    <location>
        <begin position="482"/>
        <end position="502"/>
    </location>
</feature>
<feature type="disulfide bond" evidence="1">
    <location>
        <begin position="660"/>
        <end position="670"/>
    </location>
</feature>
<feature type="disulfide bond" evidence="1">
    <location>
        <begin position="664"/>
        <end position="676"/>
    </location>
</feature>
<feature type="disulfide bond" evidence="1">
    <location>
        <begin position="678"/>
        <end position="687"/>
    </location>
</feature>
<feature type="splice variant" id="VSP_031001" description="In isoform 3 and isoform 4." evidence="17 18">
    <location>
        <begin position="114"/>
        <end position="116"/>
    </location>
</feature>
<feature type="splice variant" id="VSP_031002" description="In isoform 4." evidence="18">
    <original>DNQGLTIGILVTILCLLAAGFVVYLKRKTLIRLLFT</original>
    <variation>GKEARQEAAESNRERGQGQEPVGSQEHASTASLTLI</variation>
    <location>
        <begin position="705"/>
        <end position="740"/>
    </location>
</feature>
<feature type="splice variant" id="VSP_005476" description="In isoform 2 and isoform 3." evidence="17 19">
    <original>DNQGLTIGILVTILCLLAAGFVVYLKRKTLIRLL</original>
    <variation>EARQEAAESNRERGQGQEPVGSQEHASTASLTLI</variation>
    <location>
        <begin position="705"/>
        <end position="738"/>
    </location>
</feature>
<feature type="splice variant" id="VSP_005477" description="In isoform 2 and isoform 3." evidence="17 19">
    <location>
        <begin position="739"/>
        <end position="909"/>
    </location>
</feature>
<feature type="splice variant" id="VSP_031003" description="In isoform 4." evidence="18">
    <location>
        <begin position="741"/>
        <end position="909"/>
    </location>
</feature>
<feature type="sequence variant" id="VAR_038542" description="In dbSNP:rs3740199." evidence="9 10 15 16">
    <original>G</original>
    <variation>R</variation>
    <location>
        <position position="48"/>
    </location>
</feature>
<feature type="sequence variant" id="VAR_036143" description="In a breast cancer sample; somatic mutation." evidence="12">
    <original>D</original>
    <variation>H</variation>
    <location>
        <position position="301"/>
    </location>
</feature>
<feature type="sequence variant" id="VAR_036144" description="In a breast cancer sample; somatic mutation; dbSNP:rs1459457663." evidence="12">
    <original>G</original>
    <variation>E</variation>
    <location>
        <position position="479"/>
    </location>
</feature>
<feature type="sequence variant" id="VAR_066310" description="In a cutaneous metastatic melanoma sample; somatic mutation." evidence="14">
    <original>G</original>
    <variation>E</variation>
    <location>
        <position position="712"/>
    </location>
</feature>
<feature type="sequence variant" id="VAR_036145" description="In a breast cancer sample; somatic mutation." evidence="12">
    <original>L</original>
    <variation>F</variation>
    <location>
        <position position="792"/>
    </location>
</feature>
<feature type="sequence variant" id="VAR_066311" description="In a cutaneous metastatic melanoma sample; somatic mutation; dbSNP:rs151030407." evidence="14">
    <original>P</original>
    <variation>S</variation>
    <location>
        <position position="893"/>
    </location>
</feature>
<proteinExistence type="evidence at protein level"/>
<sequence>MAARPLPVSPARALLLALAGALLAPCEARGVSLWNQGRADEVVSASVGSGDLWIPVKSFDSKNHPEVLNIRLQRESKELIINLERNEGLIASSFTETHYLQDGTDVSLARNYTVILGHCYYHGHVRGYSDSAVSLSTCSGLRGLIVFENESYVLEPMKSATNRYKLFPAKKLKSVRGSCGSHHNTPNLAAKNVFPPPSQTWARRHKRETLKATKYVELVIVADNREFQRQGKDLEKVKQRLIEIANHVDKFYRPLNIRIVLVGVEVWNDMDKCSVSQDPFTSLHEFLDWRKMKLLPRKSHDNAQLVSGVYFQGTTIGMAPIMSMCTADQSGGIVMDHSDNPLGAAVTLAHELGHNFGMNHDTLDRGCSCQMAVEKGGCIMNASTGYPFPMVFSSCSRKDLETSLEKGMGVCLFNLPEVRESFGGQKCGNRFVEEGEECDCGEPEECMNRCCNATTCTLKPDAVCAHGLCCEDCQLKPAGTACRDSSNSCDLPEFCTGASPHCPANVYLHDGHSCQDVDGYCYNGICQTHEQQCVTLWGPGAKPAPGICFERVNSAGDPYGNCGKVSKSSFAKCEMRDAKCGKIQCQGGASRPVIGTNAVSIETNIPLQQGGRILCRGTHVYLGDDMPDPGLVLAGTKCADGKICLNRQCQNISVFGVHECAMQCHGRGVCNNRKNCHCEAHWAPPFCDKFGFGGSTDSGPIRQADNQGLTIGILVTILCLLAAGFVVYLKRKTLIRLLFTNKKTTIEKLRCVRPSRPPRGFQPCQAHLGHLGKGLMRKPPDSYPPKDNPRRLLQCQNVDISRPLNGLNVPQPQSTQRVLPPLHRAPRAPSVPARPLPAKPALRQAQGTCKPNPPQKPLPADPLARTTRLTHALARTPGQWETGLRLAPLRPAPQYPHQVPRSTHTAYIK</sequence>